<accession>A8G905</accession>
<protein>
    <recommendedName>
        <fullName evidence="1">Ribosome maturation factor RimP</fullName>
    </recommendedName>
</protein>
<organism>
    <name type="scientific">Serratia proteamaculans (strain 568)</name>
    <dbReference type="NCBI Taxonomy" id="399741"/>
    <lineage>
        <taxon>Bacteria</taxon>
        <taxon>Pseudomonadati</taxon>
        <taxon>Pseudomonadota</taxon>
        <taxon>Gammaproteobacteria</taxon>
        <taxon>Enterobacterales</taxon>
        <taxon>Yersiniaceae</taxon>
        <taxon>Serratia</taxon>
    </lineage>
</organism>
<keyword id="KW-0963">Cytoplasm</keyword>
<keyword id="KW-0690">Ribosome biogenesis</keyword>
<proteinExistence type="inferred from homology"/>
<dbReference type="EMBL" id="CP000826">
    <property type="protein sequence ID" value="ABV39595.1"/>
    <property type="status" value="ALT_INIT"/>
    <property type="molecule type" value="Genomic_DNA"/>
</dbReference>
<dbReference type="SMR" id="A8G905"/>
<dbReference type="STRING" id="399741.Spro_0487"/>
<dbReference type="KEGG" id="spe:Spro_0487"/>
<dbReference type="eggNOG" id="COG0779">
    <property type="taxonomic scope" value="Bacteria"/>
</dbReference>
<dbReference type="HOGENOM" id="CLU_070525_1_1_6"/>
<dbReference type="GO" id="GO:0005829">
    <property type="term" value="C:cytosol"/>
    <property type="evidence" value="ECO:0007669"/>
    <property type="project" value="TreeGrafter"/>
</dbReference>
<dbReference type="GO" id="GO:0000028">
    <property type="term" value="P:ribosomal small subunit assembly"/>
    <property type="evidence" value="ECO:0007669"/>
    <property type="project" value="TreeGrafter"/>
</dbReference>
<dbReference type="GO" id="GO:0006412">
    <property type="term" value="P:translation"/>
    <property type="evidence" value="ECO:0007669"/>
    <property type="project" value="TreeGrafter"/>
</dbReference>
<dbReference type="CDD" id="cd01734">
    <property type="entry name" value="YlxS_C"/>
    <property type="match status" value="1"/>
</dbReference>
<dbReference type="FunFam" id="2.30.30.180:FF:000001">
    <property type="entry name" value="Ribosome maturation factor RimP"/>
    <property type="match status" value="1"/>
</dbReference>
<dbReference type="FunFam" id="3.30.300.70:FF:000001">
    <property type="entry name" value="Ribosome maturation factor RimP"/>
    <property type="match status" value="1"/>
</dbReference>
<dbReference type="Gene3D" id="2.30.30.180">
    <property type="entry name" value="Ribosome maturation factor RimP, C-terminal domain"/>
    <property type="match status" value="1"/>
</dbReference>
<dbReference type="Gene3D" id="3.30.300.70">
    <property type="entry name" value="RimP-like superfamily, N-terminal"/>
    <property type="match status" value="1"/>
</dbReference>
<dbReference type="HAMAP" id="MF_01077">
    <property type="entry name" value="RimP"/>
    <property type="match status" value="1"/>
</dbReference>
<dbReference type="InterPro" id="IPR003728">
    <property type="entry name" value="Ribosome_maturation_RimP"/>
</dbReference>
<dbReference type="InterPro" id="IPR028998">
    <property type="entry name" value="RimP_C"/>
</dbReference>
<dbReference type="InterPro" id="IPR036847">
    <property type="entry name" value="RimP_C_sf"/>
</dbReference>
<dbReference type="InterPro" id="IPR028989">
    <property type="entry name" value="RimP_N"/>
</dbReference>
<dbReference type="InterPro" id="IPR035956">
    <property type="entry name" value="RimP_N_sf"/>
</dbReference>
<dbReference type="NCBIfam" id="NF000927">
    <property type="entry name" value="PRK00092.1-1"/>
    <property type="match status" value="1"/>
</dbReference>
<dbReference type="PANTHER" id="PTHR33867">
    <property type="entry name" value="RIBOSOME MATURATION FACTOR RIMP"/>
    <property type="match status" value="1"/>
</dbReference>
<dbReference type="PANTHER" id="PTHR33867:SF1">
    <property type="entry name" value="RIBOSOME MATURATION FACTOR RIMP"/>
    <property type="match status" value="1"/>
</dbReference>
<dbReference type="Pfam" id="PF17384">
    <property type="entry name" value="DUF150_C"/>
    <property type="match status" value="1"/>
</dbReference>
<dbReference type="Pfam" id="PF02576">
    <property type="entry name" value="RimP_N"/>
    <property type="match status" value="1"/>
</dbReference>
<dbReference type="SUPFAM" id="SSF74942">
    <property type="entry name" value="YhbC-like, C-terminal domain"/>
    <property type="match status" value="1"/>
</dbReference>
<dbReference type="SUPFAM" id="SSF75420">
    <property type="entry name" value="YhbC-like, N-terminal domain"/>
    <property type="match status" value="1"/>
</dbReference>
<comment type="function">
    <text evidence="1">Required for maturation of 30S ribosomal subunits.</text>
</comment>
<comment type="subcellular location">
    <subcellularLocation>
        <location evidence="1">Cytoplasm</location>
    </subcellularLocation>
</comment>
<comment type="similarity">
    <text evidence="1">Belongs to the RimP family.</text>
</comment>
<comment type="sequence caution" evidence="2">
    <conflict type="erroneous initiation">
        <sequence resource="EMBL-CDS" id="ABV39595"/>
    </conflict>
</comment>
<reference key="1">
    <citation type="submission" date="2007-09" db="EMBL/GenBank/DDBJ databases">
        <title>Complete sequence of chromosome of Serratia proteamaculans 568.</title>
        <authorList>
            <consortium name="US DOE Joint Genome Institute"/>
            <person name="Copeland A."/>
            <person name="Lucas S."/>
            <person name="Lapidus A."/>
            <person name="Barry K."/>
            <person name="Glavina del Rio T."/>
            <person name="Dalin E."/>
            <person name="Tice H."/>
            <person name="Pitluck S."/>
            <person name="Chain P."/>
            <person name="Malfatti S."/>
            <person name="Shin M."/>
            <person name="Vergez L."/>
            <person name="Schmutz J."/>
            <person name="Larimer F."/>
            <person name="Land M."/>
            <person name="Hauser L."/>
            <person name="Kyrpides N."/>
            <person name="Kim E."/>
            <person name="Taghavi S."/>
            <person name="Newman L."/>
            <person name="Vangronsveld J."/>
            <person name="van der Lelie D."/>
            <person name="Richardson P."/>
        </authorList>
    </citation>
    <scope>NUCLEOTIDE SEQUENCE [LARGE SCALE GENOMIC DNA]</scope>
    <source>
        <strain>568</strain>
    </source>
</reference>
<gene>
    <name evidence="1" type="primary">rimP</name>
    <name type="ordered locus">Spro_0487</name>
</gene>
<evidence type="ECO:0000255" key="1">
    <source>
        <dbReference type="HAMAP-Rule" id="MF_01077"/>
    </source>
</evidence>
<evidence type="ECO:0000305" key="2"/>
<name>RIMP_SERP5</name>
<sequence>MGLSTLEQKLTEMLSAPVEALGFELVGIEFIRARQSTLRIYIDSENGINVDDCADVSHQVSAVLDVEEPITVAYNLEVSSPGLDRPMFTAEHYTRFLGDEVSLVLRMAVQNRRKWQGIIKSVDGEMITVAVEGKDEVFALSNIQKANLVPHF</sequence>
<feature type="chain" id="PRO_0000384768" description="Ribosome maturation factor RimP">
    <location>
        <begin position="1"/>
        <end position="152"/>
    </location>
</feature>